<protein>
    <recommendedName>
        <fullName evidence="5">2-oxoglutarate-dependent dioxygenase 21, chloroplastic</fullName>
        <ecNumber evidence="2 3">1.14.11.-</ecNumber>
    </recommendedName>
    <alternativeName>
        <fullName evidence="5">Melatonin 2-hydroxylase</fullName>
    </alternativeName>
    <alternativeName>
        <fullName evidence="6">OsSTA135</fullName>
    </alternativeName>
</protein>
<accession>Q7XR83</accession>
<accession>A0A0N7KJW1</accession>
<accession>Q259W6</accession>
<proteinExistence type="evidence at protein level"/>
<evidence type="ECO:0000255" key="1"/>
<evidence type="ECO:0000255" key="2">
    <source>
        <dbReference type="PROSITE-ProRule" id="PRU00805"/>
    </source>
</evidence>
<evidence type="ECO:0000269" key="3">
    <source>
    </source>
</evidence>
<evidence type="ECO:0000269" key="4">
    <source>
    </source>
</evidence>
<evidence type="ECO:0000303" key="5">
    <source>
    </source>
</evidence>
<evidence type="ECO:0000305" key="6"/>
<evidence type="ECO:0000312" key="7">
    <source>
        <dbReference type="EMBL" id="BAF16100.1"/>
    </source>
</evidence>
<evidence type="ECO:0000312" key="8">
    <source>
        <dbReference type="EMBL" id="CAE02797.1"/>
    </source>
</evidence>
<evidence type="ECO:0000312" key="9">
    <source>
        <dbReference type="EMBL" id="CAJ86195.1"/>
    </source>
</evidence>
<evidence type="ECO:0000312" key="10">
    <source>
        <dbReference type="EMBL" id="EEE61866.1"/>
    </source>
</evidence>
<name>ODD21_ORYSJ</name>
<organism>
    <name type="scientific">Oryza sativa subsp. japonica</name>
    <name type="common">Rice</name>
    <dbReference type="NCBI Taxonomy" id="39947"/>
    <lineage>
        <taxon>Eukaryota</taxon>
        <taxon>Viridiplantae</taxon>
        <taxon>Streptophyta</taxon>
        <taxon>Embryophyta</taxon>
        <taxon>Tracheophyta</taxon>
        <taxon>Spermatophyta</taxon>
        <taxon>Magnoliopsida</taxon>
        <taxon>Liliopsida</taxon>
        <taxon>Poales</taxon>
        <taxon>Poaceae</taxon>
        <taxon>BOP clade</taxon>
        <taxon>Oryzoideae</taxon>
        <taxon>Oryzeae</taxon>
        <taxon>Oryzinae</taxon>
        <taxon>Oryza</taxon>
        <taxon>Oryza sativa</taxon>
    </lineage>
</organism>
<sequence length="333" mass="37187">MPAVAGSLYMASQHKGVPPPLPPPPRPLPVINLGRLTMDSASRALAVRDIVLACRERGCFEVVNHGISRSCMNGALEAASEFFQLSTERKEEFASDDIRQPIRYDTSSRDGISMSRSFLKHYANPLDDWIKFWPTQPPTYREKMGEYAVETQRVSMQLMEAILQGLGLGPSYLQEKLEGGVQFVALNNYPQSSAKKADKIGLAPHSDYGFLTILLQSSPGLEVMHHEDDAWTSVPAIPGALHVHVGDHLEVLSNGQLKSLVHRAVLNPNESRISIASIHGLSMDEEVHCAEELVDEHHPKMYRGSSFQDFLDFLPANMNRYKRYVESLRIDKP</sequence>
<dbReference type="EC" id="1.14.11.-" evidence="2 3"/>
<dbReference type="EMBL" id="AL606619">
    <property type="protein sequence ID" value="CAE02797.1"/>
    <property type="molecule type" value="Genomic_DNA"/>
</dbReference>
<dbReference type="EMBL" id="AL732340">
    <property type="protein sequence ID" value="CAJ86195.1"/>
    <property type="status" value="ALT_SEQ"/>
    <property type="molecule type" value="Genomic_DNA"/>
</dbReference>
<dbReference type="EMBL" id="AP008210">
    <property type="protein sequence ID" value="BAF16100.1"/>
    <property type="molecule type" value="Genomic_DNA"/>
</dbReference>
<dbReference type="EMBL" id="AP014960">
    <property type="protein sequence ID" value="BAS91521.1"/>
    <property type="molecule type" value="Genomic_DNA"/>
</dbReference>
<dbReference type="EMBL" id="CM000141">
    <property type="protein sequence ID" value="EEE61866.1"/>
    <property type="molecule type" value="Genomic_DNA"/>
</dbReference>
<dbReference type="SMR" id="Q7XR83"/>
<dbReference type="FunCoup" id="Q7XR83">
    <property type="interactions" value="82"/>
</dbReference>
<dbReference type="STRING" id="39947.Q7XR83"/>
<dbReference type="PaxDb" id="39947-Q7XR83"/>
<dbReference type="EnsemblPlants" id="Os04t0667400-01">
    <property type="protein sequence ID" value="Os04t0667400-01"/>
    <property type="gene ID" value="Os04g0667400"/>
</dbReference>
<dbReference type="Gramene" id="Os04t0667400-01">
    <property type="protein sequence ID" value="Os04t0667400-01"/>
    <property type="gene ID" value="Os04g0667400"/>
</dbReference>
<dbReference type="KEGG" id="dosa:Os04g0667400"/>
<dbReference type="KEGG" id="osa:4337327"/>
<dbReference type="eggNOG" id="KOG0143">
    <property type="taxonomic scope" value="Eukaryota"/>
</dbReference>
<dbReference type="HOGENOM" id="CLU_010119_16_4_1"/>
<dbReference type="InParanoid" id="Q7XR83"/>
<dbReference type="OMA" id="EQGCFQV"/>
<dbReference type="OrthoDB" id="627829at2759"/>
<dbReference type="Proteomes" id="UP000000763">
    <property type="component" value="Chromosome 4"/>
</dbReference>
<dbReference type="Proteomes" id="UP000007752">
    <property type="component" value="Chromosome 4"/>
</dbReference>
<dbReference type="Proteomes" id="UP000059680">
    <property type="component" value="Chromosome 4"/>
</dbReference>
<dbReference type="GO" id="GO:0009507">
    <property type="term" value="C:chloroplast"/>
    <property type="evidence" value="ECO:0007669"/>
    <property type="project" value="UniProtKB-SubCell"/>
</dbReference>
<dbReference type="GO" id="GO:0051213">
    <property type="term" value="F:dioxygenase activity"/>
    <property type="evidence" value="ECO:0007669"/>
    <property type="project" value="UniProtKB-KW"/>
</dbReference>
<dbReference type="GO" id="GO:0031418">
    <property type="term" value="F:L-ascorbic acid binding"/>
    <property type="evidence" value="ECO:0007669"/>
    <property type="project" value="UniProtKB-KW"/>
</dbReference>
<dbReference type="GO" id="GO:0046872">
    <property type="term" value="F:metal ion binding"/>
    <property type="evidence" value="ECO:0007669"/>
    <property type="project" value="UniProtKB-KW"/>
</dbReference>
<dbReference type="FunFam" id="2.60.120.330:FF:000029">
    <property type="entry name" value="KAR-UP oxidoreductase 1"/>
    <property type="match status" value="1"/>
</dbReference>
<dbReference type="Gene3D" id="2.60.120.330">
    <property type="entry name" value="B-lactam Antibiotic, Isopenicillin N Synthase, Chain"/>
    <property type="match status" value="1"/>
</dbReference>
<dbReference type="InterPro" id="IPR026992">
    <property type="entry name" value="DIOX_N"/>
</dbReference>
<dbReference type="InterPro" id="IPR044861">
    <property type="entry name" value="IPNS-like_FE2OG_OXY"/>
</dbReference>
<dbReference type="InterPro" id="IPR027443">
    <property type="entry name" value="IPNS-like_sf"/>
</dbReference>
<dbReference type="InterPro" id="IPR005123">
    <property type="entry name" value="Oxoglu/Fe-dep_dioxygenase_dom"/>
</dbReference>
<dbReference type="InterPro" id="IPR050295">
    <property type="entry name" value="Plant_2OG-oxidoreductases"/>
</dbReference>
<dbReference type="PANTHER" id="PTHR47991">
    <property type="entry name" value="OXOGLUTARATE/IRON-DEPENDENT DIOXYGENASE"/>
    <property type="match status" value="1"/>
</dbReference>
<dbReference type="Pfam" id="PF03171">
    <property type="entry name" value="2OG-FeII_Oxy"/>
    <property type="match status" value="1"/>
</dbReference>
<dbReference type="Pfam" id="PF14226">
    <property type="entry name" value="DIOX_N"/>
    <property type="match status" value="1"/>
</dbReference>
<dbReference type="SUPFAM" id="SSF51197">
    <property type="entry name" value="Clavaminate synthase-like"/>
    <property type="match status" value="1"/>
</dbReference>
<dbReference type="PROSITE" id="PS51471">
    <property type="entry name" value="FE2OG_OXY"/>
    <property type="match status" value="1"/>
</dbReference>
<comment type="function">
    <text evidence="3">Involved in melatonin degradation (PubMed:25728912). Catalyzes the hydroxylation of melatonin to produce 2-hydroxymelatonin (PubMed:25728912).</text>
</comment>
<comment type="catalytic activity">
    <reaction evidence="3">
        <text>melatonin + 2-oxoglutarate + O2 = 2-hydroxymelatonin + succinate + CO2</text>
        <dbReference type="Rhea" id="RHEA:62512"/>
        <dbReference type="ChEBI" id="CHEBI:15379"/>
        <dbReference type="ChEBI" id="CHEBI:16526"/>
        <dbReference type="ChEBI" id="CHEBI:16796"/>
        <dbReference type="ChEBI" id="CHEBI:16810"/>
        <dbReference type="ChEBI" id="CHEBI:30031"/>
        <dbReference type="ChEBI" id="CHEBI:145792"/>
    </reaction>
    <physiologicalReaction direction="left-to-right" evidence="3">
        <dbReference type="Rhea" id="RHEA:62513"/>
    </physiologicalReaction>
</comment>
<comment type="cofactor">
    <cofactor evidence="2 3">
        <name>Fe(2+)</name>
        <dbReference type="ChEBI" id="CHEBI:29033"/>
    </cofactor>
    <text evidence="2">Binds 1 Fe(2+) ion per subunit.</text>
</comment>
<comment type="cofactor">
    <cofactor evidence="3">
        <name>L-ascorbate</name>
        <dbReference type="ChEBI" id="CHEBI:38290"/>
    </cofactor>
</comment>
<comment type="biophysicochemical properties">
    <kinetics>
        <KM evidence="3">145 uM for melatonin</KM>
        <Vmax evidence="3">18.5 pmol/sec/mg enzyme toward melatonine</Vmax>
    </kinetics>
    <phDependence>
        <text evidence="3">Optimum pH is 8.0.</text>
    </phDependence>
    <temperatureDependence>
        <text evidence="3">Optimum temperature is 30 degrees Celsius.</text>
    </temperatureDependence>
</comment>
<comment type="subcellular location">
    <subcellularLocation>
        <location evidence="4">Plastid</location>
        <location evidence="4">Chloroplast</location>
    </subcellularLocation>
</comment>
<comment type="tissue specificity">
    <text evidence="3">Expressed in roots.</text>
</comment>
<comment type="induction">
    <text evidence="4">Induced by cadmium.</text>
</comment>
<comment type="similarity">
    <text evidence="6">Belongs to the iron/ascorbate-dependent oxidoreductase family.</text>
</comment>
<comment type="sequence caution" evidence="6">
    <conflict type="erroneous gene model prediction">
        <sequence resource="EMBL-CDS" id="CAJ86195"/>
    </conflict>
</comment>
<feature type="transit peptide" description="Chloroplast" evidence="1">
    <location>
        <begin position="1"/>
        <end position="43"/>
    </location>
</feature>
<feature type="chain" id="PRO_0000449520" description="2-oxoglutarate-dependent dioxygenase 21, chloroplastic">
    <location>
        <begin position="44"/>
        <end position="333"/>
    </location>
</feature>
<feature type="domain" description="Fe2OG dioxygenase" evidence="2">
    <location>
        <begin position="180"/>
        <end position="281"/>
    </location>
</feature>
<feature type="binding site" evidence="2">
    <location>
        <position position="205"/>
    </location>
    <ligand>
        <name>Fe cation</name>
        <dbReference type="ChEBI" id="CHEBI:24875"/>
    </ligand>
</feature>
<feature type="binding site" evidence="2">
    <location>
        <position position="207"/>
    </location>
    <ligand>
        <name>Fe cation</name>
        <dbReference type="ChEBI" id="CHEBI:24875"/>
    </ligand>
</feature>
<feature type="binding site" evidence="2">
    <location>
        <position position="262"/>
    </location>
    <ligand>
        <name>Fe cation</name>
        <dbReference type="ChEBI" id="CHEBI:24875"/>
    </ligand>
</feature>
<feature type="binding site" evidence="2">
    <location>
        <position position="272"/>
    </location>
    <ligand>
        <name>2-oxoglutarate</name>
        <dbReference type="ChEBI" id="CHEBI:16810"/>
    </ligand>
</feature>
<gene>
    <name evidence="5" type="primary">2ODD21</name>
    <name evidence="6" type="synonym">STA135</name>
    <name evidence="7" type="ordered locus">Os04g0667400</name>
    <name evidence="6" type="ordered locus">LOC_Os04g57180</name>
    <name evidence="9" type="ORF">B0811B10.4</name>
    <name evidence="10" type="ORF">OsJ_16545</name>
    <name evidence="8" type="ORF">OSJNBa0043A12.2</name>
</gene>
<keyword id="KW-0150">Chloroplast</keyword>
<keyword id="KW-0223">Dioxygenase</keyword>
<keyword id="KW-0408">Iron</keyword>
<keyword id="KW-0479">Metal-binding</keyword>
<keyword id="KW-0560">Oxidoreductase</keyword>
<keyword id="KW-0934">Plastid</keyword>
<keyword id="KW-1185">Reference proteome</keyword>
<keyword id="KW-0809">Transit peptide</keyword>
<keyword id="KW-0847">Vitamin C</keyword>
<reference key="1">
    <citation type="journal article" date="2002" name="Nature">
        <title>Sequence and analysis of rice chromosome 4.</title>
        <authorList>
            <person name="Feng Q."/>
            <person name="Zhang Y."/>
            <person name="Hao P."/>
            <person name="Wang S."/>
            <person name="Fu G."/>
            <person name="Huang Y."/>
            <person name="Li Y."/>
            <person name="Zhu J."/>
            <person name="Liu Y."/>
            <person name="Hu X."/>
            <person name="Jia P."/>
            <person name="Zhang Y."/>
            <person name="Zhao Q."/>
            <person name="Ying K."/>
            <person name="Yu S."/>
            <person name="Tang Y."/>
            <person name="Weng Q."/>
            <person name="Zhang L."/>
            <person name="Lu Y."/>
            <person name="Mu J."/>
            <person name="Lu Y."/>
            <person name="Zhang L.S."/>
            <person name="Yu Z."/>
            <person name="Fan D."/>
            <person name="Liu X."/>
            <person name="Lu T."/>
            <person name="Li C."/>
            <person name="Wu Y."/>
            <person name="Sun T."/>
            <person name="Lei H."/>
            <person name="Li T."/>
            <person name="Hu H."/>
            <person name="Guan J."/>
            <person name="Wu M."/>
            <person name="Zhang R."/>
            <person name="Zhou B."/>
            <person name="Chen Z."/>
            <person name="Chen L."/>
            <person name="Jin Z."/>
            <person name="Wang R."/>
            <person name="Yin H."/>
            <person name="Cai Z."/>
            <person name="Ren S."/>
            <person name="Lv G."/>
            <person name="Gu W."/>
            <person name="Zhu G."/>
            <person name="Tu Y."/>
            <person name="Jia J."/>
            <person name="Zhang Y."/>
            <person name="Chen J."/>
            <person name="Kang H."/>
            <person name="Chen X."/>
            <person name="Shao C."/>
            <person name="Sun Y."/>
            <person name="Hu Q."/>
            <person name="Zhang X."/>
            <person name="Zhang W."/>
            <person name="Wang L."/>
            <person name="Ding C."/>
            <person name="Sheng H."/>
            <person name="Gu J."/>
            <person name="Chen S."/>
            <person name="Ni L."/>
            <person name="Zhu F."/>
            <person name="Chen W."/>
            <person name="Lan L."/>
            <person name="Lai Y."/>
            <person name="Cheng Z."/>
            <person name="Gu M."/>
            <person name="Jiang J."/>
            <person name="Li J."/>
            <person name="Hong G."/>
            <person name="Xue Y."/>
            <person name="Han B."/>
        </authorList>
    </citation>
    <scope>NUCLEOTIDE SEQUENCE [LARGE SCALE GENOMIC DNA]</scope>
    <source>
        <strain>cv. Nipponbare</strain>
    </source>
</reference>
<reference key="2">
    <citation type="journal article" date="2005" name="Nature">
        <title>The map-based sequence of the rice genome.</title>
        <authorList>
            <consortium name="International rice genome sequencing project (IRGSP)"/>
        </authorList>
    </citation>
    <scope>NUCLEOTIDE SEQUENCE [LARGE SCALE GENOMIC DNA]</scope>
    <source>
        <strain>cv. Nipponbare</strain>
    </source>
</reference>
<reference key="3">
    <citation type="journal article" date="2008" name="Nucleic Acids Res.">
        <title>The rice annotation project database (RAP-DB): 2008 update.</title>
        <authorList>
            <consortium name="The rice annotation project (RAP)"/>
        </authorList>
    </citation>
    <scope>GENOME REANNOTATION</scope>
    <source>
        <strain>cv. Nipponbare</strain>
    </source>
</reference>
<reference key="4">
    <citation type="journal article" date="2013" name="Rice">
        <title>Improvement of the Oryza sativa Nipponbare reference genome using next generation sequence and optical map data.</title>
        <authorList>
            <person name="Kawahara Y."/>
            <person name="de la Bastide M."/>
            <person name="Hamilton J.P."/>
            <person name="Kanamori H."/>
            <person name="McCombie W.R."/>
            <person name="Ouyang S."/>
            <person name="Schwartz D.C."/>
            <person name="Tanaka T."/>
            <person name="Wu J."/>
            <person name="Zhou S."/>
            <person name="Childs K.L."/>
            <person name="Davidson R.M."/>
            <person name="Lin H."/>
            <person name="Quesada-Ocampo L."/>
            <person name="Vaillancourt B."/>
            <person name="Sakai H."/>
            <person name="Lee S.S."/>
            <person name="Kim J."/>
            <person name="Numa H."/>
            <person name="Itoh T."/>
            <person name="Buell C.R."/>
            <person name="Matsumoto T."/>
        </authorList>
    </citation>
    <scope>GENOME REANNOTATION</scope>
    <source>
        <strain>cv. Nipponbare</strain>
    </source>
</reference>
<reference key="5">
    <citation type="journal article" date="2005" name="PLoS Biol.">
        <title>The genomes of Oryza sativa: a history of duplications.</title>
        <authorList>
            <person name="Yu J."/>
            <person name="Wang J."/>
            <person name="Lin W."/>
            <person name="Li S."/>
            <person name="Li H."/>
            <person name="Zhou J."/>
            <person name="Ni P."/>
            <person name="Dong W."/>
            <person name="Hu S."/>
            <person name="Zeng C."/>
            <person name="Zhang J."/>
            <person name="Zhang Y."/>
            <person name="Li R."/>
            <person name="Xu Z."/>
            <person name="Li S."/>
            <person name="Li X."/>
            <person name="Zheng H."/>
            <person name="Cong L."/>
            <person name="Lin L."/>
            <person name="Yin J."/>
            <person name="Geng J."/>
            <person name="Li G."/>
            <person name="Shi J."/>
            <person name="Liu J."/>
            <person name="Lv H."/>
            <person name="Li J."/>
            <person name="Wang J."/>
            <person name="Deng Y."/>
            <person name="Ran L."/>
            <person name="Shi X."/>
            <person name="Wang X."/>
            <person name="Wu Q."/>
            <person name="Li C."/>
            <person name="Ren X."/>
            <person name="Wang J."/>
            <person name="Wang X."/>
            <person name="Li D."/>
            <person name="Liu D."/>
            <person name="Zhang X."/>
            <person name="Ji Z."/>
            <person name="Zhao W."/>
            <person name="Sun Y."/>
            <person name="Zhang Z."/>
            <person name="Bao J."/>
            <person name="Han Y."/>
            <person name="Dong L."/>
            <person name="Ji J."/>
            <person name="Chen P."/>
            <person name="Wu S."/>
            <person name="Liu J."/>
            <person name="Xiao Y."/>
            <person name="Bu D."/>
            <person name="Tan J."/>
            <person name="Yang L."/>
            <person name="Ye C."/>
            <person name="Zhang J."/>
            <person name="Xu J."/>
            <person name="Zhou Y."/>
            <person name="Yu Y."/>
            <person name="Zhang B."/>
            <person name="Zhuang S."/>
            <person name="Wei H."/>
            <person name="Liu B."/>
            <person name="Lei M."/>
            <person name="Yu H."/>
            <person name="Li Y."/>
            <person name="Xu H."/>
            <person name="Wei S."/>
            <person name="He X."/>
            <person name="Fang L."/>
            <person name="Zhang Z."/>
            <person name="Zhang Y."/>
            <person name="Huang X."/>
            <person name="Su Z."/>
            <person name="Tong W."/>
            <person name="Li J."/>
            <person name="Tong Z."/>
            <person name="Li S."/>
            <person name="Ye J."/>
            <person name="Wang L."/>
            <person name="Fang L."/>
            <person name="Lei T."/>
            <person name="Chen C.-S."/>
            <person name="Chen H.-C."/>
            <person name="Xu Z."/>
            <person name="Li H."/>
            <person name="Huang H."/>
            <person name="Zhang F."/>
            <person name="Xu H."/>
            <person name="Li N."/>
            <person name="Zhao C."/>
            <person name="Li S."/>
            <person name="Dong L."/>
            <person name="Huang Y."/>
            <person name="Li L."/>
            <person name="Xi Y."/>
            <person name="Qi Q."/>
            <person name="Li W."/>
            <person name="Zhang B."/>
            <person name="Hu W."/>
            <person name="Zhang Y."/>
            <person name="Tian X."/>
            <person name="Jiao Y."/>
            <person name="Liang X."/>
            <person name="Jin J."/>
            <person name="Gao L."/>
            <person name="Zheng W."/>
            <person name="Hao B."/>
            <person name="Liu S.-M."/>
            <person name="Wang W."/>
            <person name="Yuan L."/>
            <person name="Cao M."/>
            <person name="McDermott J."/>
            <person name="Samudrala R."/>
            <person name="Wang J."/>
            <person name="Wong G.K.-S."/>
            <person name="Yang H."/>
        </authorList>
    </citation>
    <scope>NUCLEOTIDE SEQUENCE [LARGE SCALE GENOMIC DNA]</scope>
    <source>
        <strain>cv. Nipponbare</strain>
    </source>
</reference>
<reference key="6">
    <citation type="journal article" date="2015" name="J. Pineal Res.">
        <title>Molecular cloning of melatonin 2-hydroxylase responsible for 2-hydroxymelatonin production in rice (Oryza sativa).</title>
        <authorList>
            <person name="Byeon Y."/>
            <person name="Back K."/>
        </authorList>
    </citation>
    <scope>FUNCTION</scope>
    <scope>CATALYTIC ACTIVITY</scope>
    <scope>COFACTOR</scope>
    <scope>BIOPHYSICOCHEMICAL PROPERTIES</scope>
    <scope>TISSUE SPECIFICITY</scope>
</reference>
<reference key="7">
    <citation type="journal article" date="2015" name="J. Pineal Res.">
        <title>Coordinated regulation of melatonin synthesis and degradation genes in rice leaves in response to cadmium treatment.</title>
        <authorList>
            <person name="Byeon Y."/>
            <person name="Lee H.Y."/>
            <person name="Hwang O.J."/>
            <person name="Lee H.J."/>
            <person name="Lee K."/>
            <person name="Back K."/>
        </authorList>
    </citation>
    <scope>SUBCELLULAR LOCATION</scope>
    <scope>INDUCTION BY CADMIUM</scope>
</reference>